<dbReference type="EMBL" id="CP001104">
    <property type="protein sequence ID" value="ACR71340.1"/>
    <property type="molecule type" value="Genomic_DNA"/>
</dbReference>
<dbReference type="RefSeq" id="WP_012738577.1">
    <property type="nucleotide sequence ID" value="NC_012778.1"/>
</dbReference>
<dbReference type="SMR" id="C4Z2T5"/>
<dbReference type="STRING" id="515620.EUBELI_00304"/>
<dbReference type="GeneID" id="41355077"/>
<dbReference type="KEGG" id="eel:EUBELI_00304"/>
<dbReference type="eggNOG" id="COG0091">
    <property type="taxonomic scope" value="Bacteria"/>
</dbReference>
<dbReference type="HOGENOM" id="CLU_083987_3_1_9"/>
<dbReference type="Proteomes" id="UP000001476">
    <property type="component" value="Chromosome"/>
</dbReference>
<dbReference type="GO" id="GO:0022625">
    <property type="term" value="C:cytosolic large ribosomal subunit"/>
    <property type="evidence" value="ECO:0007669"/>
    <property type="project" value="TreeGrafter"/>
</dbReference>
<dbReference type="GO" id="GO:0019843">
    <property type="term" value="F:rRNA binding"/>
    <property type="evidence" value="ECO:0007669"/>
    <property type="project" value="UniProtKB-UniRule"/>
</dbReference>
<dbReference type="GO" id="GO:0003735">
    <property type="term" value="F:structural constituent of ribosome"/>
    <property type="evidence" value="ECO:0007669"/>
    <property type="project" value="InterPro"/>
</dbReference>
<dbReference type="GO" id="GO:0006412">
    <property type="term" value="P:translation"/>
    <property type="evidence" value="ECO:0007669"/>
    <property type="project" value="UniProtKB-UniRule"/>
</dbReference>
<dbReference type="CDD" id="cd00336">
    <property type="entry name" value="Ribosomal_L22"/>
    <property type="match status" value="1"/>
</dbReference>
<dbReference type="Gene3D" id="3.90.470.10">
    <property type="entry name" value="Ribosomal protein L22/L17"/>
    <property type="match status" value="1"/>
</dbReference>
<dbReference type="HAMAP" id="MF_01331_B">
    <property type="entry name" value="Ribosomal_uL22_B"/>
    <property type="match status" value="1"/>
</dbReference>
<dbReference type="InterPro" id="IPR001063">
    <property type="entry name" value="Ribosomal_uL22"/>
</dbReference>
<dbReference type="InterPro" id="IPR005727">
    <property type="entry name" value="Ribosomal_uL22_bac/chlpt-type"/>
</dbReference>
<dbReference type="InterPro" id="IPR047867">
    <property type="entry name" value="Ribosomal_uL22_bac/org-type"/>
</dbReference>
<dbReference type="InterPro" id="IPR018260">
    <property type="entry name" value="Ribosomal_uL22_CS"/>
</dbReference>
<dbReference type="InterPro" id="IPR036394">
    <property type="entry name" value="Ribosomal_uL22_sf"/>
</dbReference>
<dbReference type="NCBIfam" id="TIGR01044">
    <property type="entry name" value="rplV_bact"/>
    <property type="match status" value="1"/>
</dbReference>
<dbReference type="PANTHER" id="PTHR13501">
    <property type="entry name" value="CHLOROPLAST 50S RIBOSOMAL PROTEIN L22-RELATED"/>
    <property type="match status" value="1"/>
</dbReference>
<dbReference type="PANTHER" id="PTHR13501:SF8">
    <property type="entry name" value="LARGE RIBOSOMAL SUBUNIT PROTEIN UL22M"/>
    <property type="match status" value="1"/>
</dbReference>
<dbReference type="Pfam" id="PF00237">
    <property type="entry name" value="Ribosomal_L22"/>
    <property type="match status" value="1"/>
</dbReference>
<dbReference type="SUPFAM" id="SSF54843">
    <property type="entry name" value="Ribosomal protein L22"/>
    <property type="match status" value="1"/>
</dbReference>
<dbReference type="PROSITE" id="PS00464">
    <property type="entry name" value="RIBOSOMAL_L22"/>
    <property type="match status" value="1"/>
</dbReference>
<proteinExistence type="inferred from homology"/>
<feature type="chain" id="PRO_1000214603" description="Large ribosomal subunit protein uL22">
    <location>
        <begin position="1"/>
        <end position="128"/>
    </location>
</feature>
<feature type="region of interest" description="Disordered" evidence="2">
    <location>
        <begin position="1"/>
        <end position="20"/>
    </location>
</feature>
<feature type="compositionally biased region" description="Basic and acidic residues" evidence="2">
    <location>
        <begin position="9"/>
        <end position="20"/>
    </location>
</feature>
<organism>
    <name type="scientific">Lachnospira eligens (strain ATCC 27750 / DSM 3376 / VPI C15-48 / C15-B4)</name>
    <name type="common">Eubacterium eligens</name>
    <dbReference type="NCBI Taxonomy" id="515620"/>
    <lineage>
        <taxon>Bacteria</taxon>
        <taxon>Bacillati</taxon>
        <taxon>Bacillota</taxon>
        <taxon>Clostridia</taxon>
        <taxon>Lachnospirales</taxon>
        <taxon>Lachnospiraceae</taxon>
        <taxon>Lachnospira</taxon>
    </lineage>
</organism>
<gene>
    <name evidence="1" type="primary">rplV</name>
    <name type="ordered locus">EUBELI_00304</name>
</gene>
<keyword id="KW-1185">Reference proteome</keyword>
<keyword id="KW-0687">Ribonucleoprotein</keyword>
<keyword id="KW-0689">Ribosomal protein</keyword>
<keyword id="KW-0694">RNA-binding</keyword>
<keyword id="KW-0699">rRNA-binding</keyword>
<reference key="1">
    <citation type="journal article" date="2009" name="Proc. Natl. Acad. Sci. U.S.A.">
        <title>Characterizing a model human gut microbiota composed of members of its two dominant bacterial phyla.</title>
        <authorList>
            <person name="Mahowald M.A."/>
            <person name="Rey F.E."/>
            <person name="Seedorf H."/>
            <person name="Turnbaugh P.J."/>
            <person name="Fulton R.S."/>
            <person name="Wollam A."/>
            <person name="Shah N."/>
            <person name="Wang C."/>
            <person name="Magrini V."/>
            <person name="Wilson R.K."/>
            <person name="Cantarel B.L."/>
            <person name="Coutinho P.M."/>
            <person name="Henrissat B."/>
            <person name="Crock L.W."/>
            <person name="Russell A."/>
            <person name="Verberkmoes N.C."/>
            <person name="Hettich R.L."/>
            <person name="Gordon J.I."/>
        </authorList>
    </citation>
    <scope>NUCLEOTIDE SEQUENCE [LARGE SCALE GENOMIC DNA]</scope>
    <source>
        <strain>ATCC 27750 / DSM 3376 / VPI C15-48 / C15-B4</strain>
    </source>
</reference>
<sequence>MANGHRSQIKRERNAVKDTRPSAKLSYARVSVQKACFVLDAIRGKSLDEALAIVMYNPRYASSIIEKLLKSAAANAENNNGMDPSKLYVEECYANKGPTMKRVHPRAQGRAYRIEKRMSHITVVLNER</sequence>
<accession>C4Z2T5</accession>
<evidence type="ECO:0000255" key="1">
    <source>
        <dbReference type="HAMAP-Rule" id="MF_01331"/>
    </source>
</evidence>
<evidence type="ECO:0000256" key="2">
    <source>
        <dbReference type="SAM" id="MobiDB-lite"/>
    </source>
</evidence>
<evidence type="ECO:0000305" key="3"/>
<protein>
    <recommendedName>
        <fullName evidence="1">Large ribosomal subunit protein uL22</fullName>
    </recommendedName>
    <alternativeName>
        <fullName evidence="3">50S ribosomal protein L22</fullName>
    </alternativeName>
</protein>
<comment type="function">
    <text evidence="1">This protein binds specifically to 23S rRNA; its binding is stimulated by other ribosomal proteins, e.g. L4, L17, and L20. It is important during the early stages of 50S assembly. It makes multiple contacts with different domains of the 23S rRNA in the assembled 50S subunit and ribosome (By similarity).</text>
</comment>
<comment type="function">
    <text evidence="1">The globular domain of the protein is located near the polypeptide exit tunnel on the outside of the subunit, while an extended beta-hairpin is found that lines the wall of the exit tunnel in the center of the 70S ribosome.</text>
</comment>
<comment type="subunit">
    <text evidence="1">Part of the 50S ribosomal subunit.</text>
</comment>
<comment type="similarity">
    <text evidence="1">Belongs to the universal ribosomal protein uL22 family.</text>
</comment>
<name>RL22_LACE2</name>